<reference key="1">
    <citation type="journal article" date="2010" name="PLoS Genet.">
        <title>Genome sequence of the plant growth promoting endophytic bacterium Enterobacter sp. 638.</title>
        <authorList>
            <person name="Taghavi S."/>
            <person name="van der Lelie D."/>
            <person name="Hoffman A."/>
            <person name="Zhang Y.B."/>
            <person name="Walla M.D."/>
            <person name="Vangronsveld J."/>
            <person name="Newman L."/>
            <person name="Monchy S."/>
        </authorList>
    </citation>
    <scope>NUCLEOTIDE SEQUENCE [LARGE SCALE GENOMIC DNA]</scope>
    <source>
        <strain>638</strain>
    </source>
</reference>
<protein>
    <recommendedName>
        <fullName evidence="1">Peptide chain release factor 1</fullName>
        <shortName evidence="1">RF-1</shortName>
    </recommendedName>
</protein>
<sequence length="360" mass="40375">MKPSIVAKLEALHERHEEVQALLGDAATIADQDRFRALSREYAQLSDVSRCFTDWQQVQEDIETAQMMLDDPEMREMAQEELQEAKARAEEMEQQLQVLLLPKDPDDERNAFVEVRAGTGGDEAALFAGDLFRMYSRYAESRRWRVEIMSANEGEHGGYKEVIAKISGEGVYGRLKFESGGHRVQRVPATESQGRIHTSACTVAVMPEVPEAELPDINPGDLRIDTFRSSGAGGQHVNTTDSAIRITHLPTGIVVECQDERSQHKNKAKALSVLGSRIRAAEIAKRQQAEASTRRNLLGSGDRSDRNRTYNFPQGRVTDHRINLTIYRLDEIMEGKLDSLIEPIVQEYQADQLAALADQD</sequence>
<evidence type="ECO:0000255" key="1">
    <source>
        <dbReference type="HAMAP-Rule" id="MF_00093"/>
    </source>
</evidence>
<evidence type="ECO:0000256" key="2">
    <source>
        <dbReference type="SAM" id="MobiDB-lite"/>
    </source>
</evidence>
<feature type="chain" id="PRO_1000057617" description="Peptide chain release factor 1">
    <location>
        <begin position="1"/>
        <end position="360"/>
    </location>
</feature>
<feature type="region of interest" description="Disordered" evidence="2">
    <location>
        <begin position="285"/>
        <end position="313"/>
    </location>
</feature>
<feature type="modified residue" description="N5-methylglutamine" evidence="1">
    <location>
        <position position="235"/>
    </location>
</feature>
<gene>
    <name evidence="1" type="primary">prfA</name>
    <name type="ordered locus">Ent638_2337</name>
</gene>
<dbReference type="EMBL" id="CP000653">
    <property type="protein sequence ID" value="ABP61006.1"/>
    <property type="molecule type" value="Genomic_DNA"/>
</dbReference>
<dbReference type="RefSeq" id="WP_012017720.1">
    <property type="nucleotide sequence ID" value="NC_009436.1"/>
</dbReference>
<dbReference type="SMR" id="A4WBC6"/>
<dbReference type="STRING" id="399742.Ent638_2337"/>
<dbReference type="KEGG" id="ent:Ent638_2337"/>
<dbReference type="eggNOG" id="COG0216">
    <property type="taxonomic scope" value="Bacteria"/>
</dbReference>
<dbReference type="HOGENOM" id="CLU_036856_0_1_6"/>
<dbReference type="OrthoDB" id="9806673at2"/>
<dbReference type="Proteomes" id="UP000000230">
    <property type="component" value="Chromosome"/>
</dbReference>
<dbReference type="GO" id="GO:0005737">
    <property type="term" value="C:cytoplasm"/>
    <property type="evidence" value="ECO:0007669"/>
    <property type="project" value="UniProtKB-SubCell"/>
</dbReference>
<dbReference type="GO" id="GO:0016149">
    <property type="term" value="F:translation release factor activity, codon specific"/>
    <property type="evidence" value="ECO:0007669"/>
    <property type="project" value="UniProtKB-UniRule"/>
</dbReference>
<dbReference type="FunFam" id="3.30.160.20:FF:000004">
    <property type="entry name" value="Peptide chain release factor 1"/>
    <property type="match status" value="1"/>
</dbReference>
<dbReference type="FunFam" id="3.30.70.1660:FF:000002">
    <property type="entry name" value="Peptide chain release factor 1"/>
    <property type="match status" value="1"/>
</dbReference>
<dbReference type="FunFam" id="3.30.70.1660:FF:000004">
    <property type="entry name" value="Peptide chain release factor 1"/>
    <property type="match status" value="1"/>
</dbReference>
<dbReference type="Gene3D" id="3.30.160.20">
    <property type="match status" value="1"/>
</dbReference>
<dbReference type="Gene3D" id="3.30.70.1660">
    <property type="match status" value="1"/>
</dbReference>
<dbReference type="Gene3D" id="6.10.140.1950">
    <property type="match status" value="1"/>
</dbReference>
<dbReference type="HAMAP" id="MF_00093">
    <property type="entry name" value="Rel_fac_1"/>
    <property type="match status" value="1"/>
</dbReference>
<dbReference type="InterPro" id="IPR005139">
    <property type="entry name" value="PCRF"/>
</dbReference>
<dbReference type="InterPro" id="IPR000352">
    <property type="entry name" value="Pep_chain_release_fac_I"/>
</dbReference>
<dbReference type="InterPro" id="IPR045853">
    <property type="entry name" value="Pep_chain_release_fac_I_sf"/>
</dbReference>
<dbReference type="InterPro" id="IPR050057">
    <property type="entry name" value="Prokaryotic/Mito_RF"/>
</dbReference>
<dbReference type="InterPro" id="IPR004373">
    <property type="entry name" value="RF-1"/>
</dbReference>
<dbReference type="NCBIfam" id="TIGR00019">
    <property type="entry name" value="prfA"/>
    <property type="match status" value="1"/>
</dbReference>
<dbReference type="NCBIfam" id="NF001859">
    <property type="entry name" value="PRK00591.1"/>
    <property type="match status" value="1"/>
</dbReference>
<dbReference type="PANTHER" id="PTHR43804">
    <property type="entry name" value="LD18447P"/>
    <property type="match status" value="1"/>
</dbReference>
<dbReference type="PANTHER" id="PTHR43804:SF7">
    <property type="entry name" value="LD18447P"/>
    <property type="match status" value="1"/>
</dbReference>
<dbReference type="Pfam" id="PF03462">
    <property type="entry name" value="PCRF"/>
    <property type="match status" value="1"/>
</dbReference>
<dbReference type="Pfam" id="PF00472">
    <property type="entry name" value="RF-1"/>
    <property type="match status" value="1"/>
</dbReference>
<dbReference type="SMART" id="SM00937">
    <property type="entry name" value="PCRF"/>
    <property type="match status" value="1"/>
</dbReference>
<dbReference type="SUPFAM" id="SSF75620">
    <property type="entry name" value="Release factor"/>
    <property type="match status" value="1"/>
</dbReference>
<dbReference type="PROSITE" id="PS00745">
    <property type="entry name" value="RF_PROK_I"/>
    <property type="match status" value="1"/>
</dbReference>
<proteinExistence type="inferred from homology"/>
<name>RF1_ENT38</name>
<keyword id="KW-0963">Cytoplasm</keyword>
<keyword id="KW-0488">Methylation</keyword>
<keyword id="KW-0648">Protein biosynthesis</keyword>
<organism>
    <name type="scientific">Enterobacter sp. (strain 638)</name>
    <dbReference type="NCBI Taxonomy" id="399742"/>
    <lineage>
        <taxon>Bacteria</taxon>
        <taxon>Pseudomonadati</taxon>
        <taxon>Pseudomonadota</taxon>
        <taxon>Gammaproteobacteria</taxon>
        <taxon>Enterobacterales</taxon>
        <taxon>Enterobacteriaceae</taxon>
        <taxon>Enterobacter</taxon>
    </lineage>
</organism>
<accession>A4WBC6</accession>
<comment type="function">
    <text evidence="1">Peptide chain release factor 1 directs the termination of translation in response to the peptide chain termination codons UAG and UAA.</text>
</comment>
<comment type="subcellular location">
    <subcellularLocation>
        <location evidence="1">Cytoplasm</location>
    </subcellularLocation>
</comment>
<comment type="PTM">
    <text evidence="1">Methylated by PrmC. Methylation increases the termination efficiency of RF1.</text>
</comment>
<comment type="similarity">
    <text evidence="1">Belongs to the prokaryotic/mitochondrial release factor family.</text>
</comment>